<evidence type="ECO:0000255" key="1">
    <source>
        <dbReference type="HAMAP-Rule" id="MF_00134"/>
    </source>
</evidence>
<keyword id="KW-0028">Amino-acid biosynthesis</keyword>
<keyword id="KW-0057">Aromatic amino acid biosynthesis</keyword>
<keyword id="KW-0210">Decarboxylase</keyword>
<keyword id="KW-0456">Lyase</keyword>
<keyword id="KW-0822">Tryptophan biosynthesis</keyword>
<name>TRPC_BACMK</name>
<protein>
    <recommendedName>
        <fullName evidence="1">Indole-3-glycerol phosphate synthase</fullName>
        <shortName evidence="1">IGPS</shortName>
        <ecNumber evidence="1">4.1.1.48</ecNumber>
    </recommendedName>
</protein>
<reference key="1">
    <citation type="journal article" date="2008" name="Chem. Biol. Interact.">
        <title>Extending the Bacillus cereus group genomics to putative food-borne pathogens of different toxicity.</title>
        <authorList>
            <person name="Lapidus A."/>
            <person name="Goltsman E."/>
            <person name="Auger S."/>
            <person name="Galleron N."/>
            <person name="Segurens B."/>
            <person name="Dossat C."/>
            <person name="Land M.L."/>
            <person name="Broussolle V."/>
            <person name="Brillard J."/>
            <person name="Guinebretiere M.-H."/>
            <person name="Sanchis V."/>
            <person name="Nguen-the C."/>
            <person name="Lereclus D."/>
            <person name="Richardson P."/>
            <person name="Wincker P."/>
            <person name="Weissenbach J."/>
            <person name="Ehrlich S.D."/>
            <person name="Sorokin A."/>
        </authorList>
    </citation>
    <scope>NUCLEOTIDE SEQUENCE [LARGE SCALE GENOMIC DNA]</scope>
    <source>
        <strain>KBAB4</strain>
    </source>
</reference>
<comment type="catalytic activity">
    <reaction evidence="1">
        <text>1-(2-carboxyphenylamino)-1-deoxy-D-ribulose 5-phosphate + H(+) = (1S,2R)-1-C-(indol-3-yl)glycerol 3-phosphate + CO2 + H2O</text>
        <dbReference type="Rhea" id="RHEA:23476"/>
        <dbReference type="ChEBI" id="CHEBI:15377"/>
        <dbReference type="ChEBI" id="CHEBI:15378"/>
        <dbReference type="ChEBI" id="CHEBI:16526"/>
        <dbReference type="ChEBI" id="CHEBI:58613"/>
        <dbReference type="ChEBI" id="CHEBI:58866"/>
        <dbReference type="EC" id="4.1.1.48"/>
    </reaction>
</comment>
<comment type="pathway">
    <text evidence="1">Amino-acid biosynthesis; L-tryptophan biosynthesis; L-tryptophan from chorismate: step 4/5.</text>
</comment>
<comment type="similarity">
    <text evidence="1">Belongs to the TrpC family.</text>
</comment>
<accession>A9VJW0</accession>
<proteinExistence type="inferred from homology"/>
<organism>
    <name type="scientific">Bacillus mycoides (strain KBAB4)</name>
    <name type="common">Bacillus weihenstephanensis</name>
    <dbReference type="NCBI Taxonomy" id="315730"/>
    <lineage>
        <taxon>Bacteria</taxon>
        <taxon>Bacillati</taxon>
        <taxon>Bacillota</taxon>
        <taxon>Bacilli</taxon>
        <taxon>Bacillales</taxon>
        <taxon>Bacillaceae</taxon>
        <taxon>Bacillus</taxon>
        <taxon>Bacillus cereus group</taxon>
    </lineage>
</organism>
<feature type="chain" id="PRO_1000095849" description="Indole-3-glycerol phosphate synthase">
    <location>
        <begin position="1"/>
        <end position="253"/>
    </location>
</feature>
<sequence length="253" mass="28309">MGTILDKIVEQKKVEVAELYETYSPVKEKRKTHSLVKALEQFTVIAEVKRASPSKGDINLHVDVPKQVKTYEECGAGAVSVLTDGQFFKGSFHDLETARAESNIPLLCKDFIIDKIQIDRAYEAGADLILLIVAALSKEKLNELYNYVLEKGLEAIVEVHDEQELEIAIRLNPHVIGINNRNLKTFEVDLSQTEKLGKRLNEENLLWISESGIHSKEDIIRVKRAGAKGVLVGEALMTSSSISNFFEDCKVNI</sequence>
<gene>
    <name evidence="1" type="primary">trpC</name>
    <name type="ordered locus">BcerKBAB4_1147</name>
</gene>
<dbReference type="EC" id="4.1.1.48" evidence="1"/>
<dbReference type="EMBL" id="CP000903">
    <property type="protein sequence ID" value="ABY42396.1"/>
    <property type="molecule type" value="Genomic_DNA"/>
</dbReference>
<dbReference type="RefSeq" id="WP_002125998.1">
    <property type="nucleotide sequence ID" value="NC_010184.1"/>
</dbReference>
<dbReference type="SMR" id="A9VJW0"/>
<dbReference type="KEGG" id="bwe:BcerKBAB4_1147"/>
<dbReference type="eggNOG" id="COG0134">
    <property type="taxonomic scope" value="Bacteria"/>
</dbReference>
<dbReference type="HOGENOM" id="CLU_034247_2_1_9"/>
<dbReference type="UniPathway" id="UPA00035">
    <property type="reaction ID" value="UER00043"/>
</dbReference>
<dbReference type="Proteomes" id="UP000002154">
    <property type="component" value="Chromosome"/>
</dbReference>
<dbReference type="GO" id="GO:0004425">
    <property type="term" value="F:indole-3-glycerol-phosphate synthase activity"/>
    <property type="evidence" value="ECO:0007669"/>
    <property type="project" value="UniProtKB-UniRule"/>
</dbReference>
<dbReference type="GO" id="GO:0004640">
    <property type="term" value="F:phosphoribosylanthranilate isomerase activity"/>
    <property type="evidence" value="ECO:0007669"/>
    <property type="project" value="TreeGrafter"/>
</dbReference>
<dbReference type="GO" id="GO:0000162">
    <property type="term" value="P:L-tryptophan biosynthetic process"/>
    <property type="evidence" value="ECO:0007669"/>
    <property type="project" value="UniProtKB-UniRule"/>
</dbReference>
<dbReference type="CDD" id="cd00331">
    <property type="entry name" value="IGPS"/>
    <property type="match status" value="1"/>
</dbReference>
<dbReference type="FunFam" id="3.20.20.70:FF:000024">
    <property type="entry name" value="Indole-3-glycerol phosphate synthase"/>
    <property type="match status" value="1"/>
</dbReference>
<dbReference type="Gene3D" id="3.20.20.70">
    <property type="entry name" value="Aldolase class I"/>
    <property type="match status" value="1"/>
</dbReference>
<dbReference type="HAMAP" id="MF_00134_A">
    <property type="entry name" value="IGPS_A"/>
    <property type="match status" value="1"/>
</dbReference>
<dbReference type="HAMAP" id="MF_00134_B">
    <property type="entry name" value="IGPS_B"/>
    <property type="match status" value="1"/>
</dbReference>
<dbReference type="InterPro" id="IPR013785">
    <property type="entry name" value="Aldolase_TIM"/>
</dbReference>
<dbReference type="InterPro" id="IPR045186">
    <property type="entry name" value="Indole-3-glycerol_P_synth"/>
</dbReference>
<dbReference type="InterPro" id="IPR013798">
    <property type="entry name" value="Indole-3-glycerol_P_synth_dom"/>
</dbReference>
<dbReference type="InterPro" id="IPR001468">
    <property type="entry name" value="Indole-3-GlycerolPSynthase_CS"/>
</dbReference>
<dbReference type="InterPro" id="IPR011060">
    <property type="entry name" value="RibuloseP-bd_barrel"/>
</dbReference>
<dbReference type="NCBIfam" id="NF001371">
    <property type="entry name" value="PRK00278.1-3"/>
    <property type="match status" value="1"/>
</dbReference>
<dbReference type="NCBIfam" id="NF001377">
    <property type="entry name" value="PRK00278.2-4"/>
    <property type="match status" value="1"/>
</dbReference>
<dbReference type="PANTHER" id="PTHR22854:SF2">
    <property type="entry name" value="INDOLE-3-GLYCEROL-PHOSPHATE SYNTHASE"/>
    <property type="match status" value="1"/>
</dbReference>
<dbReference type="PANTHER" id="PTHR22854">
    <property type="entry name" value="TRYPTOPHAN BIOSYNTHESIS PROTEIN"/>
    <property type="match status" value="1"/>
</dbReference>
<dbReference type="Pfam" id="PF00218">
    <property type="entry name" value="IGPS"/>
    <property type="match status" value="1"/>
</dbReference>
<dbReference type="SUPFAM" id="SSF51366">
    <property type="entry name" value="Ribulose-phoshate binding barrel"/>
    <property type="match status" value="1"/>
</dbReference>
<dbReference type="PROSITE" id="PS00614">
    <property type="entry name" value="IGPS"/>
    <property type="match status" value="1"/>
</dbReference>